<reference key="1">
    <citation type="journal article" date="2000" name="Nature">
        <title>DNA sequence of both chromosomes of the cholera pathogen Vibrio cholerae.</title>
        <authorList>
            <person name="Heidelberg J.F."/>
            <person name="Eisen J.A."/>
            <person name="Nelson W.C."/>
            <person name="Clayton R.A."/>
            <person name="Gwinn M.L."/>
            <person name="Dodson R.J."/>
            <person name="Haft D.H."/>
            <person name="Hickey E.K."/>
            <person name="Peterson J.D."/>
            <person name="Umayam L.A."/>
            <person name="Gill S.R."/>
            <person name="Nelson K.E."/>
            <person name="Read T.D."/>
            <person name="Tettelin H."/>
            <person name="Richardson D.L."/>
            <person name="Ermolaeva M.D."/>
            <person name="Vamathevan J.J."/>
            <person name="Bass S."/>
            <person name="Qin H."/>
            <person name="Dragoi I."/>
            <person name="Sellers P."/>
            <person name="McDonald L.A."/>
            <person name="Utterback T.R."/>
            <person name="Fleischmann R.D."/>
            <person name="Nierman W.C."/>
            <person name="White O."/>
            <person name="Salzberg S.L."/>
            <person name="Smith H.O."/>
            <person name="Colwell R.R."/>
            <person name="Mekalanos J.J."/>
            <person name="Venter J.C."/>
            <person name="Fraser C.M."/>
        </authorList>
    </citation>
    <scope>NUCLEOTIDE SEQUENCE [LARGE SCALE GENOMIC DNA]</scope>
    <source>
        <strain>ATCC 39315 / El Tor Inaba N16961</strain>
    </source>
</reference>
<comment type="function">
    <text evidence="1">Catalyzes a mechanistically unusual reaction, the ATP-dependent insertion of CO2 between the N7 and N8 nitrogen atoms of 7,8-diaminopelargonic acid (DAPA, also called 7,8-diammoniononanoate) to form a ureido ring.</text>
</comment>
<comment type="catalytic activity">
    <reaction evidence="1">
        <text>(7R,8S)-7,8-diammoniononanoate + CO2 + ATP = (4R,5S)-dethiobiotin + ADP + phosphate + 3 H(+)</text>
        <dbReference type="Rhea" id="RHEA:15805"/>
        <dbReference type="ChEBI" id="CHEBI:15378"/>
        <dbReference type="ChEBI" id="CHEBI:16526"/>
        <dbReference type="ChEBI" id="CHEBI:30616"/>
        <dbReference type="ChEBI" id="CHEBI:43474"/>
        <dbReference type="ChEBI" id="CHEBI:149469"/>
        <dbReference type="ChEBI" id="CHEBI:149473"/>
        <dbReference type="ChEBI" id="CHEBI:456216"/>
        <dbReference type="EC" id="6.3.3.3"/>
    </reaction>
</comment>
<comment type="cofactor">
    <cofactor evidence="1">
        <name>Mg(2+)</name>
        <dbReference type="ChEBI" id="CHEBI:18420"/>
    </cofactor>
</comment>
<comment type="pathway">
    <text evidence="1">Cofactor biosynthesis; biotin biosynthesis; biotin from 7,8-diaminononanoate: step 1/2.</text>
</comment>
<comment type="subunit">
    <text evidence="1">Homodimer.</text>
</comment>
<comment type="subcellular location">
    <subcellularLocation>
        <location evidence="1">Cytoplasm</location>
    </subcellularLocation>
</comment>
<comment type="similarity">
    <text evidence="1">Belongs to the dethiobiotin synthetase family.</text>
</comment>
<comment type="sequence caution" evidence="2">
    <conflict type="erroneous initiation">
        <sequence resource="EMBL-CDS" id="AAF94274"/>
    </conflict>
    <text>Extended N-terminus.</text>
</comment>
<name>BIOD_VIBCH</name>
<sequence length="231" mass="25092">MRNAIFIAGTDTDVGKTVASKAILQALATHNIATIGYKPVAAGSDKTEFGYRNSDALHLMKAATVDMPYEDVNPYALVLPTSPHIAAKHENVTIDYALLSNKLSKHKQNAELVVVEGAGGWRVPTSDSDCLSTWVKQERLPVILVVGIKLGCLSHAILTAEAIRADGLELVGWIANRINPGTEHYAEIIEHLEGRLGTPKLGEIPYMPKAKRQELGKFIQLDHLLEPDTVA</sequence>
<organism>
    <name type="scientific">Vibrio cholerae serotype O1 (strain ATCC 39315 / El Tor Inaba N16961)</name>
    <dbReference type="NCBI Taxonomy" id="243277"/>
    <lineage>
        <taxon>Bacteria</taxon>
        <taxon>Pseudomonadati</taxon>
        <taxon>Pseudomonadota</taxon>
        <taxon>Gammaproteobacteria</taxon>
        <taxon>Vibrionales</taxon>
        <taxon>Vibrionaceae</taxon>
        <taxon>Vibrio</taxon>
    </lineage>
</organism>
<accession>Q9KSZ1</accession>
<evidence type="ECO:0000255" key="1">
    <source>
        <dbReference type="HAMAP-Rule" id="MF_00336"/>
    </source>
</evidence>
<evidence type="ECO:0000305" key="2"/>
<feature type="chain" id="PRO_0000187993" description="ATP-dependent dethiobiotin synthetase BioD">
    <location>
        <begin position="1"/>
        <end position="231"/>
    </location>
</feature>
<feature type="active site" evidence="1">
    <location>
        <position position="38"/>
    </location>
</feature>
<feature type="binding site" evidence="1">
    <location>
        <begin position="13"/>
        <end position="18"/>
    </location>
    <ligand>
        <name>ATP</name>
        <dbReference type="ChEBI" id="CHEBI:30616"/>
    </ligand>
</feature>
<feature type="binding site" evidence="1">
    <location>
        <position position="17"/>
    </location>
    <ligand>
        <name>Mg(2+)</name>
        <dbReference type="ChEBI" id="CHEBI:18420"/>
    </ligand>
</feature>
<feature type="binding site" evidence="1">
    <location>
        <position position="55"/>
    </location>
    <ligand>
        <name>ATP</name>
        <dbReference type="ChEBI" id="CHEBI:30616"/>
    </ligand>
</feature>
<feature type="binding site" evidence="1">
    <location>
        <position position="55"/>
    </location>
    <ligand>
        <name>Mg(2+)</name>
        <dbReference type="ChEBI" id="CHEBI:18420"/>
    </ligand>
</feature>
<feature type="binding site" evidence="1">
    <location>
        <begin position="116"/>
        <end position="119"/>
    </location>
    <ligand>
        <name>ATP</name>
        <dbReference type="ChEBI" id="CHEBI:30616"/>
    </ligand>
</feature>
<feature type="binding site" evidence="1">
    <location>
        <position position="116"/>
    </location>
    <ligand>
        <name>Mg(2+)</name>
        <dbReference type="ChEBI" id="CHEBI:18420"/>
    </ligand>
</feature>
<feature type="binding site" evidence="1">
    <location>
        <begin position="176"/>
        <end position="177"/>
    </location>
    <ligand>
        <name>ATP</name>
        <dbReference type="ChEBI" id="CHEBI:30616"/>
    </ligand>
</feature>
<dbReference type="EC" id="6.3.3.3" evidence="1"/>
<dbReference type="EMBL" id="AE003852">
    <property type="protein sequence ID" value="AAF94274.1"/>
    <property type="status" value="ALT_INIT"/>
    <property type="molecule type" value="Genomic_DNA"/>
</dbReference>
<dbReference type="PIR" id="C82239">
    <property type="entry name" value="C82239"/>
</dbReference>
<dbReference type="RefSeq" id="NP_230760.1">
    <property type="nucleotide sequence ID" value="NC_002505.1"/>
</dbReference>
<dbReference type="RefSeq" id="WP_001243139.1">
    <property type="nucleotide sequence ID" value="NZ_LT906614.1"/>
</dbReference>
<dbReference type="SMR" id="Q9KSZ1"/>
<dbReference type="STRING" id="243277.VC_1115"/>
<dbReference type="DNASU" id="2614385"/>
<dbReference type="EnsemblBacteria" id="AAF94274">
    <property type="protein sequence ID" value="AAF94274"/>
    <property type="gene ID" value="VC_1115"/>
</dbReference>
<dbReference type="GeneID" id="69720194"/>
<dbReference type="KEGG" id="vch:VC_1115"/>
<dbReference type="PATRIC" id="fig|243277.26.peg.1064"/>
<dbReference type="eggNOG" id="COG0132">
    <property type="taxonomic scope" value="Bacteria"/>
</dbReference>
<dbReference type="HOGENOM" id="CLU_072551_0_0_6"/>
<dbReference type="UniPathway" id="UPA00078">
    <property type="reaction ID" value="UER00161"/>
</dbReference>
<dbReference type="Proteomes" id="UP000000584">
    <property type="component" value="Chromosome 1"/>
</dbReference>
<dbReference type="GO" id="GO:0005829">
    <property type="term" value="C:cytosol"/>
    <property type="evidence" value="ECO:0000318"/>
    <property type="project" value="GO_Central"/>
</dbReference>
<dbReference type="GO" id="GO:0005524">
    <property type="term" value="F:ATP binding"/>
    <property type="evidence" value="ECO:0007669"/>
    <property type="project" value="UniProtKB-UniRule"/>
</dbReference>
<dbReference type="GO" id="GO:0004141">
    <property type="term" value="F:dethiobiotin synthase activity"/>
    <property type="evidence" value="ECO:0000318"/>
    <property type="project" value="GO_Central"/>
</dbReference>
<dbReference type="GO" id="GO:0000287">
    <property type="term" value="F:magnesium ion binding"/>
    <property type="evidence" value="ECO:0007669"/>
    <property type="project" value="UniProtKB-UniRule"/>
</dbReference>
<dbReference type="GO" id="GO:0009102">
    <property type="term" value="P:biotin biosynthetic process"/>
    <property type="evidence" value="ECO:0000318"/>
    <property type="project" value="GO_Central"/>
</dbReference>
<dbReference type="CDD" id="cd03109">
    <property type="entry name" value="DTBS"/>
    <property type="match status" value="1"/>
</dbReference>
<dbReference type="FunFam" id="3.40.50.300:FF:000292">
    <property type="entry name" value="ATP-dependent dethiobiotin synthetase BioD"/>
    <property type="match status" value="1"/>
</dbReference>
<dbReference type="Gene3D" id="3.40.50.300">
    <property type="entry name" value="P-loop containing nucleotide triphosphate hydrolases"/>
    <property type="match status" value="1"/>
</dbReference>
<dbReference type="HAMAP" id="MF_00336">
    <property type="entry name" value="BioD"/>
    <property type="match status" value="1"/>
</dbReference>
<dbReference type="InterPro" id="IPR004472">
    <property type="entry name" value="DTB_synth_BioD"/>
</dbReference>
<dbReference type="InterPro" id="IPR027417">
    <property type="entry name" value="P-loop_NTPase"/>
</dbReference>
<dbReference type="NCBIfam" id="TIGR00347">
    <property type="entry name" value="bioD"/>
    <property type="match status" value="1"/>
</dbReference>
<dbReference type="PANTHER" id="PTHR43210">
    <property type="entry name" value="DETHIOBIOTIN SYNTHETASE"/>
    <property type="match status" value="1"/>
</dbReference>
<dbReference type="PANTHER" id="PTHR43210:SF5">
    <property type="entry name" value="DETHIOBIOTIN SYNTHETASE"/>
    <property type="match status" value="1"/>
</dbReference>
<dbReference type="Pfam" id="PF13500">
    <property type="entry name" value="AAA_26"/>
    <property type="match status" value="1"/>
</dbReference>
<dbReference type="PIRSF" id="PIRSF006755">
    <property type="entry name" value="DTB_synth"/>
    <property type="match status" value="1"/>
</dbReference>
<dbReference type="SUPFAM" id="SSF52540">
    <property type="entry name" value="P-loop containing nucleoside triphosphate hydrolases"/>
    <property type="match status" value="1"/>
</dbReference>
<keyword id="KW-0067">ATP-binding</keyword>
<keyword id="KW-0093">Biotin biosynthesis</keyword>
<keyword id="KW-0963">Cytoplasm</keyword>
<keyword id="KW-0436">Ligase</keyword>
<keyword id="KW-0460">Magnesium</keyword>
<keyword id="KW-0479">Metal-binding</keyword>
<keyword id="KW-0547">Nucleotide-binding</keyword>
<keyword id="KW-1185">Reference proteome</keyword>
<proteinExistence type="inferred from homology"/>
<gene>
    <name evidence="1" type="primary">bioD</name>
    <name type="ordered locus">VC_1115</name>
</gene>
<protein>
    <recommendedName>
        <fullName evidence="1">ATP-dependent dethiobiotin synthetase BioD</fullName>
        <ecNumber evidence="1">6.3.3.3</ecNumber>
    </recommendedName>
    <alternativeName>
        <fullName evidence="1">DTB synthetase</fullName>
        <shortName evidence="1">DTBS</shortName>
    </alternativeName>
    <alternativeName>
        <fullName evidence="1">Dethiobiotin synthase</fullName>
    </alternativeName>
</protein>